<name>RR4_PHLPR</name>
<proteinExistence type="inferred from homology"/>
<comment type="function">
    <text evidence="1">One of the primary rRNA binding proteins, it binds directly to 16S rRNA where it nucleates assembly of the body of the 30S subunit.</text>
</comment>
<comment type="function">
    <text evidence="1">With S5 and S12 plays an important role in translational accuracy.</text>
</comment>
<comment type="subunit">
    <text evidence="1">Part of the 30S ribosomal subunit. Contacts protein S5. The interaction surface between S4 and S5 is involved in control of translational fidelity (By similarity).</text>
</comment>
<comment type="subcellular location">
    <subcellularLocation>
        <location>Plastid</location>
        <location>Chloroplast</location>
    </subcellularLocation>
</comment>
<comment type="similarity">
    <text evidence="3">Belongs to the universal ribosomal protein uS4 family.</text>
</comment>
<geneLocation type="chloroplast"/>
<organism>
    <name type="scientific">Phleum pratense</name>
    <name type="common">Common timothy</name>
    <dbReference type="NCBI Taxonomy" id="15957"/>
    <lineage>
        <taxon>Eukaryota</taxon>
        <taxon>Viridiplantae</taxon>
        <taxon>Streptophyta</taxon>
        <taxon>Embryophyta</taxon>
        <taxon>Tracheophyta</taxon>
        <taxon>Spermatophyta</taxon>
        <taxon>Magnoliopsida</taxon>
        <taxon>Liliopsida</taxon>
        <taxon>Poales</taxon>
        <taxon>Poaceae</taxon>
        <taxon>BOP clade</taxon>
        <taxon>Pooideae</taxon>
        <taxon>Poodae</taxon>
        <taxon>Poeae</taxon>
        <taxon>Poeae Chloroplast Group 2 (Poeae type)</taxon>
        <taxon>Poodinae</taxon>
        <taxon>Phleinae</taxon>
        <taxon>Phleum</taxon>
    </lineage>
</organism>
<sequence length="196" mass="22713">MSRYRGPRLKKIRRLGALPGLTRKTPKSGSNLKKKFHSGKKEQYRIRLQEKQKLRFHYGLTERQLLRYVHIAGKAKRSTGQVLLQLLEMRLDNILFRLGMASTIPGARQLVNHRHILVNGRIVNIPSFRCKPRDIITTKDNQRSKGLVQNYIASSDPGKLPKHLTIDTLEYKGLVNKILDRKWVGLKINELLVVEY</sequence>
<reference key="1">
    <citation type="journal article" date="1994" name="Plant Syst. Evol.">
        <title>The chloroplast gene rps4 as a tool for the study of Poaceae phylogeny.</title>
        <authorList>
            <person name="Nadot S."/>
            <person name="Bajon R."/>
            <person name="Lejeune B."/>
        </authorList>
        <dbReference type="AGRICOLA" id="IND20417698"/>
    </citation>
    <scope>NUCLEOTIDE SEQUENCE [GENOMIC DNA]</scope>
</reference>
<accession>P69648</accession>
<accession>P36452</accession>
<accession>P36468</accession>
<feature type="chain" id="PRO_0000132648" description="Small ribosomal subunit protein uS4c">
    <location>
        <begin position="1"/>
        <end position="196" status="greater than"/>
    </location>
</feature>
<feature type="domain" description="S4 RNA-binding">
    <location>
        <begin position="89"/>
        <end position="157"/>
    </location>
</feature>
<feature type="region of interest" description="Disordered" evidence="2">
    <location>
        <begin position="17"/>
        <end position="36"/>
    </location>
</feature>
<feature type="non-terminal residue">
    <location>
        <position position="196"/>
    </location>
</feature>
<gene>
    <name type="primary">rps4</name>
</gene>
<dbReference type="EMBL" id="Z29248">
    <property type="protein sequence ID" value="CAA82447.1"/>
    <property type="molecule type" value="Genomic_DNA"/>
</dbReference>
<dbReference type="PIR" id="S41277">
    <property type="entry name" value="S41277"/>
</dbReference>
<dbReference type="SMR" id="P69648"/>
<dbReference type="GO" id="GO:0009507">
    <property type="term" value="C:chloroplast"/>
    <property type="evidence" value="ECO:0007669"/>
    <property type="project" value="UniProtKB-SubCell"/>
</dbReference>
<dbReference type="GO" id="GO:0015935">
    <property type="term" value="C:small ribosomal subunit"/>
    <property type="evidence" value="ECO:0007669"/>
    <property type="project" value="InterPro"/>
</dbReference>
<dbReference type="GO" id="GO:0019843">
    <property type="term" value="F:rRNA binding"/>
    <property type="evidence" value="ECO:0007669"/>
    <property type="project" value="UniProtKB-KW"/>
</dbReference>
<dbReference type="GO" id="GO:0003735">
    <property type="term" value="F:structural constituent of ribosome"/>
    <property type="evidence" value="ECO:0007669"/>
    <property type="project" value="InterPro"/>
</dbReference>
<dbReference type="GO" id="GO:0042274">
    <property type="term" value="P:ribosomal small subunit biogenesis"/>
    <property type="evidence" value="ECO:0007669"/>
    <property type="project" value="TreeGrafter"/>
</dbReference>
<dbReference type="GO" id="GO:0006412">
    <property type="term" value="P:translation"/>
    <property type="evidence" value="ECO:0007669"/>
    <property type="project" value="InterPro"/>
</dbReference>
<dbReference type="CDD" id="cd00165">
    <property type="entry name" value="S4"/>
    <property type="match status" value="1"/>
</dbReference>
<dbReference type="FunFam" id="1.10.1050.10:FF:000002">
    <property type="entry name" value="30S ribosomal protein S4, chloroplastic"/>
    <property type="match status" value="1"/>
</dbReference>
<dbReference type="FunFam" id="3.10.290.10:FF:000081">
    <property type="entry name" value="30S ribosomal protein S4, chloroplastic"/>
    <property type="match status" value="1"/>
</dbReference>
<dbReference type="Gene3D" id="1.10.1050.10">
    <property type="entry name" value="Ribosomal Protein S4 Delta 41, Chain A, domain 1"/>
    <property type="match status" value="1"/>
</dbReference>
<dbReference type="Gene3D" id="3.10.290.10">
    <property type="entry name" value="RNA-binding S4 domain"/>
    <property type="match status" value="1"/>
</dbReference>
<dbReference type="HAMAP" id="MF_01306_B">
    <property type="entry name" value="Ribosomal_uS4_B"/>
    <property type="match status" value="1"/>
</dbReference>
<dbReference type="InterPro" id="IPR022801">
    <property type="entry name" value="Ribosomal_uS4"/>
</dbReference>
<dbReference type="InterPro" id="IPR005709">
    <property type="entry name" value="Ribosomal_uS4_bac-type"/>
</dbReference>
<dbReference type="InterPro" id="IPR018079">
    <property type="entry name" value="Ribosomal_uS4_CS"/>
</dbReference>
<dbReference type="InterPro" id="IPR001912">
    <property type="entry name" value="Ribosomal_uS4_N"/>
</dbReference>
<dbReference type="InterPro" id="IPR002942">
    <property type="entry name" value="S4_RNA-bd"/>
</dbReference>
<dbReference type="InterPro" id="IPR036986">
    <property type="entry name" value="S4_RNA-bd_sf"/>
</dbReference>
<dbReference type="NCBIfam" id="NF003717">
    <property type="entry name" value="PRK05327.1"/>
    <property type="match status" value="1"/>
</dbReference>
<dbReference type="NCBIfam" id="TIGR01017">
    <property type="entry name" value="rpsD_bact"/>
    <property type="match status" value="1"/>
</dbReference>
<dbReference type="PANTHER" id="PTHR11831">
    <property type="entry name" value="30S 40S RIBOSOMAL PROTEIN"/>
    <property type="match status" value="1"/>
</dbReference>
<dbReference type="PANTHER" id="PTHR11831:SF4">
    <property type="entry name" value="SMALL RIBOSOMAL SUBUNIT PROTEIN US4M"/>
    <property type="match status" value="1"/>
</dbReference>
<dbReference type="Pfam" id="PF00163">
    <property type="entry name" value="Ribosomal_S4"/>
    <property type="match status" value="1"/>
</dbReference>
<dbReference type="Pfam" id="PF01479">
    <property type="entry name" value="S4"/>
    <property type="match status" value="1"/>
</dbReference>
<dbReference type="SMART" id="SM01390">
    <property type="entry name" value="Ribosomal_S4"/>
    <property type="match status" value="1"/>
</dbReference>
<dbReference type="SMART" id="SM00363">
    <property type="entry name" value="S4"/>
    <property type="match status" value="1"/>
</dbReference>
<dbReference type="SUPFAM" id="SSF55174">
    <property type="entry name" value="Alpha-L RNA-binding motif"/>
    <property type="match status" value="1"/>
</dbReference>
<dbReference type="PROSITE" id="PS00632">
    <property type="entry name" value="RIBOSOMAL_S4"/>
    <property type="match status" value="1"/>
</dbReference>
<dbReference type="PROSITE" id="PS50889">
    <property type="entry name" value="S4"/>
    <property type="match status" value="1"/>
</dbReference>
<keyword id="KW-0150">Chloroplast</keyword>
<keyword id="KW-0934">Plastid</keyword>
<keyword id="KW-0687">Ribonucleoprotein</keyword>
<keyword id="KW-0689">Ribosomal protein</keyword>
<keyword id="KW-0694">RNA-binding</keyword>
<keyword id="KW-0699">rRNA-binding</keyword>
<protein>
    <recommendedName>
        <fullName evidence="3">Small ribosomal subunit protein uS4c</fullName>
    </recommendedName>
    <alternativeName>
        <fullName>30S ribosomal protein S4, chloroplastic</fullName>
    </alternativeName>
</protein>
<evidence type="ECO:0000250" key="1"/>
<evidence type="ECO:0000256" key="2">
    <source>
        <dbReference type="SAM" id="MobiDB-lite"/>
    </source>
</evidence>
<evidence type="ECO:0000305" key="3"/>